<reference key="1">
    <citation type="journal article" date="2004" name="Proc. Natl. Acad. Sci. U.S.A.">
        <title>Complete genomes of two clinical Staphylococcus aureus strains: evidence for the rapid evolution of virulence and drug resistance.</title>
        <authorList>
            <person name="Holden M.T.G."/>
            <person name="Feil E.J."/>
            <person name="Lindsay J.A."/>
            <person name="Peacock S.J."/>
            <person name="Day N.P.J."/>
            <person name="Enright M.C."/>
            <person name="Foster T.J."/>
            <person name="Moore C.E."/>
            <person name="Hurst L."/>
            <person name="Atkin R."/>
            <person name="Barron A."/>
            <person name="Bason N."/>
            <person name="Bentley S.D."/>
            <person name="Chillingworth C."/>
            <person name="Chillingworth T."/>
            <person name="Churcher C."/>
            <person name="Clark L."/>
            <person name="Corton C."/>
            <person name="Cronin A."/>
            <person name="Doggett J."/>
            <person name="Dowd L."/>
            <person name="Feltwell T."/>
            <person name="Hance Z."/>
            <person name="Harris B."/>
            <person name="Hauser H."/>
            <person name="Holroyd S."/>
            <person name="Jagels K."/>
            <person name="James K.D."/>
            <person name="Lennard N."/>
            <person name="Line A."/>
            <person name="Mayes R."/>
            <person name="Moule S."/>
            <person name="Mungall K."/>
            <person name="Ormond D."/>
            <person name="Quail M.A."/>
            <person name="Rabbinowitsch E."/>
            <person name="Rutherford K.M."/>
            <person name="Sanders M."/>
            <person name="Sharp S."/>
            <person name="Simmonds M."/>
            <person name="Stevens K."/>
            <person name="Whitehead S."/>
            <person name="Barrell B.G."/>
            <person name="Spratt B.G."/>
            <person name="Parkhill J."/>
        </authorList>
    </citation>
    <scope>NUCLEOTIDE SEQUENCE [LARGE SCALE GENOMIC DNA]</scope>
    <source>
        <strain>MRSA252</strain>
    </source>
</reference>
<dbReference type="EC" id="3.1.-.-" evidence="1"/>
<dbReference type="EC" id="5.6.2.4" evidence="1"/>
<dbReference type="EMBL" id="BX571856">
    <property type="protein sequence ID" value="CAG39935.1"/>
    <property type="molecule type" value="Genomic_DNA"/>
</dbReference>
<dbReference type="RefSeq" id="WP_000154950.1">
    <property type="nucleotide sequence ID" value="NC_002952.2"/>
</dbReference>
<dbReference type="SMR" id="Q6GIC1"/>
<dbReference type="KEGG" id="sar:SAR0929"/>
<dbReference type="HOGENOM" id="CLU_001114_3_1_9"/>
<dbReference type="Proteomes" id="UP000000596">
    <property type="component" value="Chromosome"/>
</dbReference>
<dbReference type="GO" id="GO:0005829">
    <property type="term" value="C:cytosol"/>
    <property type="evidence" value="ECO:0007669"/>
    <property type="project" value="TreeGrafter"/>
</dbReference>
<dbReference type="GO" id="GO:0033202">
    <property type="term" value="C:DNA helicase complex"/>
    <property type="evidence" value="ECO:0007669"/>
    <property type="project" value="TreeGrafter"/>
</dbReference>
<dbReference type="GO" id="GO:0043138">
    <property type="term" value="F:3'-5' DNA helicase activity"/>
    <property type="evidence" value="ECO:0007669"/>
    <property type="project" value="UniProtKB-UniRule"/>
</dbReference>
<dbReference type="GO" id="GO:0008408">
    <property type="term" value="F:3'-5' exonuclease activity"/>
    <property type="evidence" value="ECO:0007669"/>
    <property type="project" value="UniProtKB-UniRule"/>
</dbReference>
<dbReference type="GO" id="GO:0005524">
    <property type="term" value="F:ATP binding"/>
    <property type="evidence" value="ECO:0007669"/>
    <property type="project" value="UniProtKB-UniRule"/>
</dbReference>
<dbReference type="GO" id="GO:0016887">
    <property type="term" value="F:ATP hydrolysis activity"/>
    <property type="evidence" value="ECO:0007669"/>
    <property type="project" value="RHEA"/>
</dbReference>
<dbReference type="GO" id="GO:0003690">
    <property type="term" value="F:double-stranded DNA binding"/>
    <property type="evidence" value="ECO:0007669"/>
    <property type="project" value="UniProtKB-UniRule"/>
</dbReference>
<dbReference type="GO" id="GO:0000724">
    <property type="term" value="P:double-strand break repair via homologous recombination"/>
    <property type="evidence" value="ECO:0007669"/>
    <property type="project" value="UniProtKB-UniRule"/>
</dbReference>
<dbReference type="CDD" id="cd17932">
    <property type="entry name" value="DEXQc_UvrD"/>
    <property type="match status" value="2"/>
</dbReference>
<dbReference type="FunFam" id="3.40.50.300:FF:001196">
    <property type="entry name" value="ATP-dependent helicase/nuclease subunit A"/>
    <property type="match status" value="1"/>
</dbReference>
<dbReference type="FunFam" id="3.40.50.300:FF:001715">
    <property type="entry name" value="ATP-dependent helicase/nuclease subunit A"/>
    <property type="match status" value="1"/>
</dbReference>
<dbReference type="Gene3D" id="3.90.320.10">
    <property type="match status" value="1"/>
</dbReference>
<dbReference type="Gene3D" id="3.40.50.300">
    <property type="entry name" value="P-loop containing nucleotide triphosphate hydrolases"/>
    <property type="match status" value="4"/>
</dbReference>
<dbReference type="Gene3D" id="1.10.486.10">
    <property type="entry name" value="PCRA, domain 4"/>
    <property type="match status" value="1"/>
</dbReference>
<dbReference type="HAMAP" id="MF_01451">
    <property type="entry name" value="AddA"/>
    <property type="match status" value="1"/>
</dbReference>
<dbReference type="InterPro" id="IPR014152">
    <property type="entry name" value="AddA"/>
</dbReference>
<dbReference type="InterPro" id="IPR014017">
    <property type="entry name" value="DNA_helicase_UvrD-like_C"/>
</dbReference>
<dbReference type="InterPro" id="IPR000212">
    <property type="entry name" value="DNA_helicase_UvrD/REP"/>
</dbReference>
<dbReference type="InterPro" id="IPR027417">
    <property type="entry name" value="P-loop_NTPase"/>
</dbReference>
<dbReference type="InterPro" id="IPR011604">
    <property type="entry name" value="PDDEXK-like_dom_sf"/>
</dbReference>
<dbReference type="InterPro" id="IPR038726">
    <property type="entry name" value="PDDEXK_AddAB-type"/>
</dbReference>
<dbReference type="InterPro" id="IPR011335">
    <property type="entry name" value="Restrct_endonuc-II-like"/>
</dbReference>
<dbReference type="InterPro" id="IPR014016">
    <property type="entry name" value="UvrD-like_ATP-bd"/>
</dbReference>
<dbReference type="NCBIfam" id="TIGR02785">
    <property type="entry name" value="addA_Gpos"/>
    <property type="match status" value="1"/>
</dbReference>
<dbReference type="PANTHER" id="PTHR11070:SF48">
    <property type="entry name" value="ATP-DEPENDENT HELICASE_NUCLEASE SUBUNIT A"/>
    <property type="match status" value="1"/>
</dbReference>
<dbReference type="PANTHER" id="PTHR11070">
    <property type="entry name" value="UVRD / RECB / PCRA DNA HELICASE FAMILY MEMBER"/>
    <property type="match status" value="1"/>
</dbReference>
<dbReference type="Pfam" id="PF12705">
    <property type="entry name" value="PDDEXK_1"/>
    <property type="match status" value="1"/>
</dbReference>
<dbReference type="Pfam" id="PF00580">
    <property type="entry name" value="UvrD-helicase"/>
    <property type="match status" value="1"/>
</dbReference>
<dbReference type="Pfam" id="PF13361">
    <property type="entry name" value="UvrD_C"/>
    <property type="match status" value="1"/>
</dbReference>
<dbReference type="SUPFAM" id="SSF52540">
    <property type="entry name" value="P-loop containing nucleoside triphosphate hydrolases"/>
    <property type="match status" value="1"/>
</dbReference>
<dbReference type="SUPFAM" id="SSF52980">
    <property type="entry name" value="Restriction endonuclease-like"/>
    <property type="match status" value="1"/>
</dbReference>
<dbReference type="PROSITE" id="PS51198">
    <property type="entry name" value="UVRD_HELICASE_ATP_BIND"/>
    <property type="match status" value="1"/>
</dbReference>
<dbReference type="PROSITE" id="PS51217">
    <property type="entry name" value="UVRD_HELICASE_CTER"/>
    <property type="match status" value="1"/>
</dbReference>
<feature type="chain" id="PRO_0000379311" description="ATP-dependent helicase/nuclease subunit A">
    <location>
        <begin position="1"/>
        <end position="1217"/>
    </location>
</feature>
<feature type="domain" description="UvrD-like helicase ATP-binding" evidence="1">
    <location>
        <begin position="10"/>
        <end position="475"/>
    </location>
</feature>
<feature type="domain" description="UvrD-like helicase C-terminal" evidence="1">
    <location>
        <begin position="476"/>
        <end position="786"/>
    </location>
</feature>
<feature type="binding site" evidence="1">
    <location>
        <begin position="31"/>
        <end position="38"/>
    </location>
    <ligand>
        <name>ATP</name>
        <dbReference type="ChEBI" id="CHEBI:30616"/>
    </ligand>
</feature>
<comment type="function">
    <text evidence="1">The heterodimer acts as both an ATP-dependent DNA helicase and an ATP-dependent, dual-direction single-stranded exonuclease. Recognizes the chi site generating a DNA molecule suitable for the initiation of homologous recombination. The AddA nuclease domain is required for chi fragment generation; this subunit has the helicase and 3' -&gt; 5' nuclease activities.</text>
</comment>
<comment type="catalytic activity">
    <reaction evidence="1">
        <text>Couples ATP hydrolysis with the unwinding of duplex DNA by translocating in the 3'-5' direction.</text>
        <dbReference type="EC" id="5.6.2.4"/>
    </reaction>
</comment>
<comment type="catalytic activity">
    <reaction evidence="1">
        <text>ATP + H2O = ADP + phosphate + H(+)</text>
        <dbReference type="Rhea" id="RHEA:13065"/>
        <dbReference type="ChEBI" id="CHEBI:15377"/>
        <dbReference type="ChEBI" id="CHEBI:15378"/>
        <dbReference type="ChEBI" id="CHEBI:30616"/>
        <dbReference type="ChEBI" id="CHEBI:43474"/>
        <dbReference type="ChEBI" id="CHEBI:456216"/>
        <dbReference type="EC" id="5.6.2.4"/>
    </reaction>
</comment>
<comment type="cofactor">
    <cofactor evidence="1">
        <name>Mg(2+)</name>
        <dbReference type="ChEBI" id="CHEBI:18420"/>
    </cofactor>
</comment>
<comment type="subunit">
    <text evidence="1">Heterodimer of AddA and AddB/RexB.</text>
</comment>
<comment type="similarity">
    <text evidence="1">Belongs to the helicase family. AddA subfamily.</text>
</comment>
<sequence length="1217" mass="141287">MTIPEKPQGVIWTDAQWQSIYETGQDVLVAAAAGSGKTAVLVERIIQKILRDGIDVDRLLVVTFTNLSAREMKHRVDQRIQEASIADPANAHLKNQRIKIHQAQISTLHSFCLKLIQQHYDVLNIDPNFRTSSEAENILLLEQTIDEVIEQHYDILDPAFIELTEQLSSDRSDDQFRMIIKQLYFFSVANPNPTNWLDQLVTPYEEEAQQAQLIQLLTDLSKVFITAAYDALNKAYDLFSMMDGVDKHLAVIEDERRLMGRVLEGGFIDISYLTGHEFGARLPNVTAKIKEANEMMVDALEDAKLQYKKYKSLIDKVKSDYFSREADDLKADMQQLAPRVKYLARIVKDVMSEFNRKKRSKNILDFSDYEHFALQILTNEDGSPSEIAESYRQHFHEILVDEYQDTNRVQEKILSCIKTGDEHNGNLFMVGDVKQSIYKFRQADPSLFIEKYQRFTLDGDGTGRRIDLSQNFRSRKEVLSTTNYIFKHMMDEQVGEVRYDEAAQLYYGAPYDESDHPVNLKVLVEADQEHSDLTGSEQEAHFIVEQVKDILEHQKVFDMKTGSYRSATYKDIVILERSFGQARNLQQAFKNEDIPFHVNSREGYFEQTEVRLVLSFLRAIDNPLQDIYLVGLMRSVIYQFKEDELAQIRILSPNDDYFYQSIVNYINDEAADAILVDKLKMFLSDIQSYQQYSKDHPVYQLIDKFYNDHYVIQYFSGLIGGRGRRANLYGLFNKAIEFENSSFRGLYQFIRFIDELIERGKDFGEENVVGPNDNVVRMMTIHSSKGLEFPFVIYSGLSKDFNKRDLKQPVILNQQFGLGMDYFDVDKEMAFPSLASVAYKAVAEKKLVSEEMRLVYVALTRAKEQLYLIGRVKNDKSLLELEQLSISGEHIAVNERLTSPNPFHLIYSILSKHQSASIPDDLKFEKDIAQIEDSSRPNVNISIIYFEDVSTETILDNDEYRSVNQLETMQNGNEDVKAQIKHQLDYQYPYVNDTKKPSKQSVSELKRQYETEESGTSYERVRQYRIGFSTYERPKFLSEQGKRKANEIGTLMHTVMQHLPFKKERISEVELHQYIDGLIDKHIIEADTKKDIRMDEIMTFINSELYSIIAEAEQVYRELPFVVNQALVDQLPQGDEDVSIIQGMIDLIFVKDGVHYFVDYKTDAFNRRRGMTDEEIGTQLKNKYKIQMKYYQNTLQTILNKEVKGYLYFFKFGTLQL</sequence>
<keyword id="KW-0067">ATP-binding</keyword>
<keyword id="KW-0227">DNA damage</keyword>
<keyword id="KW-0234">DNA repair</keyword>
<keyword id="KW-0238">DNA-binding</keyword>
<keyword id="KW-0269">Exonuclease</keyword>
<keyword id="KW-0347">Helicase</keyword>
<keyword id="KW-0378">Hydrolase</keyword>
<keyword id="KW-0413">Isomerase</keyword>
<keyword id="KW-0540">Nuclease</keyword>
<keyword id="KW-0547">Nucleotide-binding</keyword>
<protein>
    <recommendedName>
        <fullName evidence="1">ATP-dependent helicase/nuclease subunit A</fullName>
        <ecNumber evidence="1">3.1.-.-</ecNumber>
        <ecNumber evidence="1">5.6.2.4</ecNumber>
    </recommendedName>
    <alternativeName>
        <fullName evidence="1">ATP-dependent helicase/nuclease AddA</fullName>
    </alternativeName>
    <alternativeName>
        <fullName evidence="1">DNA 3'-5' helicase AddA</fullName>
    </alternativeName>
</protein>
<name>ADDA_STAAR</name>
<organism>
    <name type="scientific">Staphylococcus aureus (strain MRSA252)</name>
    <dbReference type="NCBI Taxonomy" id="282458"/>
    <lineage>
        <taxon>Bacteria</taxon>
        <taxon>Bacillati</taxon>
        <taxon>Bacillota</taxon>
        <taxon>Bacilli</taxon>
        <taxon>Bacillales</taxon>
        <taxon>Staphylococcaceae</taxon>
        <taxon>Staphylococcus</taxon>
    </lineage>
</organism>
<accession>Q6GIC1</accession>
<gene>
    <name evidence="1" type="primary">addA</name>
    <name type="ordered locus">SAR0929</name>
</gene>
<proteinExistence type="inferred from homology"/>
<evidence type="ECO:0000255" key="1">
    <source>
        <dbReference type="HAMAP-Rule" id="MF_01451"/>
    </source>
</evidence>